<organism>
    <name type="scientific">Caulobacter sp. (strain K31)</name>
    <dbReference type="NCBI Taxonomy" id="366602"/>
    <lineage>
        <taxon>Bacteria</taxon>
        <taxon>Pseudomonadati</taxon>
        <taxon>Pseudomonadota</taxon>
        <taxon>Alphaproteobacteria</taxon>
        <taxon>Caulobacterales</taxon>
        <taxon>Caulobacteraceae</taxon>
        <taxon>Caulobacter</taxon>
    </lineage>
</organism>
<reference key="1">
    <citation type="submission" date="2008-01" db="EMBL/GenBank/DDBJ databases">
        <title>Complete sequence of chromosome of Caulobacter sp. K31.</title>
        <authorList>
            <consortium name="US DOE Joint Genome Institute"/>
            <person name="Copeland A."/>
            <person name="Lucas S."/>
            <person name="Lapidus A."/>
            <person name="Barry K."/>
            <person name="Glavina del Rio T."/>
            <person name="Dalin E."/>
            <person name="Tice H."/>
            <person name="Pitluck S."/>
            <person name="Bruce D."/>
            <person name="Goodwin L."/>
            <person name="Thompson L.S."/>
            <person name="Brettin T."/>
            <person name="Detter J.C."/>
            <person name="Han C."/>
            <person name="Schmutz J."/>
            <person name="Larimer F."/>
            <person name="Land M."/>
            <person name="Hauser L."/>
            <person name="Kyrpides N."/>
            <person name="Kim E."/>
            <person name="Stephens C."/>
            <person name="Richardson P."/>
        </authorList>
    </citation>
    <scope>NUCLEOTIDE SEQUENCE [LARGE SCALE GENOMIC DNA]</scope>
    <source>
        <strain>K31</strain>
    </source>
</reference>
<feature type="chain" id="PRO_1000086745" description="Large ribosomal subunit protein uL16">
    <location>
        <begin position="1"/>
        <end position="146"/>
    </location>
</feature>
<dbReference type="EMBL" id="CP000927">
    <property type="protein sequence ID" value="ABZ70750.1"/>
    <property type="molecule type" value="Genomic_DNA"/>
</dbReference>
<dbReference type="SMR" id="B0T2C9"/>
<dbReference type="STRING" id="366602.Caul_1621"/>
<dbReference type="KEGG" id="cak:Caul_1621"/>
<dbReference type="eggNOG" id="COG0197">
    <property type="taxonomic scope" value="Bacteria"/>
</dbReference>
<dbReference type="HOGENOM" id="CLU_078858_2_1_5"/>
<dbReference type="OrthoDB" id="9802589at2"/>
<dbReference type="GO" id="GO:0022625">
    <property type="term" value="C:cytosolic large ribosomal subunit"/>
    <property type="evidence" value="ECO:0007669"/>
    <property type="project" value="TreeGrafter"/>
</dbReference>
<dbReference type="GO" id="GO:0019843">
    <property type="term" value="F:rRNA binding"/>
    <property type="evidence" value="ECO:0007669"/>
    <property type="project" value="UniProtKB-UniRule"/>
</dbReference>
<dbReference type="GO" id="GO:0003735">
    <property type="term" value="F:structural constituent of ribosome"/>
    <property type="evidence" value="ECO:0007669"/>
    <property type="project" value="InterPro"/>
</dbReference>
<dbReference type="GO" id="GO:0000049">
    <property type="term" value="F:tRNA binding"/>
    <property type="evidence" value="ECO:0007669"/>
    <property type="project" value="UniProtKB-KW"/>
</dbReference>
<dbReference type="GO" id="GO:0006412">
    <property type="term" value="P:translation"/>
    <property type="evidence" value="ECO:0007669"/>
    <property type="project" value="UniProtKB-UniRule"/>
</dbReference>
<dbReference type="CDD" id="cd01433">
    <property type="entry name" value="Ribosomal_L16_L10e"/>
    <property type="match status" value="1"/>
</dbReference>
<dbReference type="FunFam" id="3.90.1170.10:FF:000001">
    <property type="entry name" value="50S ribosomal protein L16"/>
    <property type="match status" value="1"/>
</dbReference>
<dbReference type="Gene3D" id="3.90.1170.10">
    <property type="entry name" value="Ribosomal protein L10e/L16"/>
    <property type="match status" value="1"/>
</dbReference>
<dbReference type="HAMAP" id="MF_01342">
    <property type="entry name" value="Ribosomal_uL16"/>
    <property type="match status" value="1"/>
</dbReference>
<dbReference type="InterPro" id="IPR047873">
    <property type="entry name" value="Ribosomal_uL16"/>
</dbReference>
<dbReference type="InterPro" id="IPR000114">
    <property type="entry name" value="Ribosomal_uL16_bact-type"/>
</dbReference>
<dbReference type="InterPro" id="IPR020798">
    <property type="entry name" value="Ribosomal_uL16_CS"/>
</dbReference>
<dbReference type="InterPro" id="IPR016180">
    <property type="entry name" value="Ribosomal_uL16_dom"/>
</dbReference>
<dbReference type="InterPro" id="IPR036920">
    <property type="entry name" value="Ribosomal_uL16_sf"/>
</dbReference>
<dbReference type="NCBIfam" id="TIGR01164">
    <property type="entry name" value="rplP_bact"/>
    <property type="match status" value="1"/>
</dbReference>
<dbReference type="PANTHER" id="PTHR12220">
    <property type="entry name" value="50S/60S RIBOSOMAL PROTEIN L16"/>
    <property type="match status" value="1"/>
</dbReference>
<dbReference type="PANTHER" id="PTHR12220:SF13">
    <property type="entry name" value="LARGE RIBOSOMAL SUBUNIT PROTEIN UL16M"/>
    <property type="match status" value="1"/>
</dbReference>
<dbReference type="Pfam" id="PF00252">
    <property type="entry name" value="Ribosomal_L16"/>
    <property type="match status" value="1"/>
</dbReference>
<dbReference type="PRINTS" id="PR00060">
    <property type="entry name" value="RIBOSOMALL16"/>
</dbReference>
<dbReference type="SUPFAM" id="SSF54686">
    <property type="entry name" value="Ribosomal protein L16p/L10e"/>
    <property type="match status" value="1"/>
</dbReference>
<dbReference type="PROSITE" id="PS00586">
    <property type="entry name" value="RIBOSOMAL_L16_1"/>
    <property type="match status" value="1"/>
</dbReference>
<dbReference type="PROSITE" id="PS00701">
    <property type="entry name" value="RIBOSOMAL_L16_2"/>
    <property type="match status" value="1"/>
</dbReference>
<protein>
    <recommendedName>
        <fullName evidence="1">Large ribosomal subunit protein uL16</fullName>
    </recommendedName>
    <alternativeName>
        <fullName evidence="2">50S ribosomal protein L16</fullName>
    </alternativeName>
</protein>
<comment type="function">
    <text evidence="1">Binds 23S rRNA and is also seen to make contacts with the A and possibly P site tRNAs.</text>
</comment>
<comment type="subunit">
    <text evidence="1">Part of the 50S ribosomal subunit.</text>
</comment>
<comment type="similarity">
    <text evidence="1">Belongs to the universal ribosomal protein uL16 family.</text>
</comment>
<accession>B0T2C9</accession>
<name>RL16_CAUSK</name>
<gene>
    <name evidence="1" type="primary">rplP</name>
    <name type="ordered locus">Caul_1621</name>
</gene>
<keyword id="KW-0687">Ribonucleoprotein</keyword>
<keyword id="KW-0689">Ribosomal protein</keyword>
<keyword id="KW-0694">RNA-binding</keyword>
<keyword id="KW-0699">rRNA-binding</keyword>
<keyword id="KW-0820">tRNA-binding</keyword>
<sequence>MLSPKKTKYRKQFKGRIHGTSKGGTLLNFGSYGLKAVEPERITARQIEAARRAITRQMKRQGRVWIRIFPDVPVTGKPAEVRMGKGKGAVDHWAARVAPGRIMFEIDGVPDDIAREALRLGAAKLPIRTRVVTRIDAGAALEAEAA</sequence>
<evidence type="ECO:0000255" key="1">
    <source>
        <dbReference type="HAMAP-Rule" id="MF_01342"/>
    </source>
</evidence>
<evidence type="ECO:0000305" key="2"/>
<proteinExistence type="inferred from homology"/>